<evidence type="ECO:0000255" key="1">
    <source>
        <dbReference type="HAMAP-Rule" id="MF_03103"/>
    </source>
</evidence>
<name>MMM1_SCHJY</name>
<gene>
    <name evidence="1" type="primary">mmm1</name>
    <name type="ORF">SJAG_04370</name>
</gene>
<sequence length="295" mass="33645">MVQLFHLTFTQGFFIGQLSVIVIVYIFLRFFLFCTKEELKNVQEESYPLSPSNEKSTTEFNDATHKVTPSLSEIYDVKTHEEESLDWFNVLVAQALSQIRQDAVSDDAALKKLQTLFNGKRKPSFLGPIHIKSISLGQRYPVFSNCRIQAQPDDTNGLRATMDLSLEDDIHFVVNTSAVLNVPRPAFAMLPVSLSVRIVHIRGKLSIYFSQSSKSAKRAYLNFTFDPDFDMGIEIQSLVGSRSKLQDIPKIAHIIETRIRKWFITRCVSPQFQQISIPNIWPSSAREGHRQKSTE</sequence>
<protein>
    <recommendedName>
        <fullName evidence="1">Maintenance of mitochondrial morphology protein 1</fullName>
    </recommendedName>
</protein>
<keyword id="KW-0256">Endoplasmic reticulum</keyword>
<keyword id="KW-0445">Lipid transport</keyword>
<keyword id="KW-0446">Lipid-binding</keyword>
<keyword id="KW-0472">Membrane</keyword>
<keyword id="KW-1185">Reference proteome</keyword>
<keyword id="KW-0812">Transmembrane</keyword>
<keyword id="KW-1133">Transmembrane helix</keyword>
<keyword id="KW-0813">Transport</keyword>
<proteinExistence type="inferred from homology"/>
<dbReference type="EMBL" id="KE651167">
    <property type="protein sequence ID" value="EEB09187.2"/>
    <property type="molecule type" value="Genomic_DNA"/>
</dbReference>
<dbReference type="RefSeq" id="XP_002175480.2">
    <property type="nucleotide sequence ID" value="XM_002175444.2"/>
</dbReference>
<dbReference type="SMR" id="B6K6N3"/>
<dbReference type="STRING" id="402676.B6K6N3"/>
<dbReference type="EnsemblFungi" id="EEB09187">
    <property type="protein sequence ID" value="EEB09187"/>
    <property type="gene ID" value="SJAG_04370"/>
</dbReference>
<dbReference type="GeneID" id="7050922"/>
<dbReference type="JaponicusDB" id="SJAG_04370">
    <property type="gene designation" value="mmm1"/>
</dbReference>
<dbReference type="VEuPathDB" id="FungiDB:SJAG_04370"/>
<dbReference type="eggNOG" id="ENOG502QUUW">
    <property type="taxonomic scope" value="Eukaryota"/>
</dbReference>
<dbReference type="HOGENOM" id="CLU_032730_0_0_1"/>
<dbReference type="OMA" id="WSFTQGL"/>
<dbReference type="OrthoDB" id="5599157at2759"/>
<dbReference type="Proteomes" id="UP000001744">
    <property type="component" value="Unassembled WGS sequence"/>
</dbReference>
<dbReference type="GO" id="GO:0005783">
    <property type="term" value="C:endoplasmic reticulum"/>
    <property type="evidence" value="ECO:0000318"/>
    <property type="project" value="GO_Central"/>
</dbReference>
<dbReference type="GO" id="GO:0005789">
    <property type="term" value="C:endoplasmic reticulum membrane"/>
    <property type="evidence" value="ECO:0007669"/>
    <property type="project" value="UniProtKB-SubCell"/>
</dbReference>
<dbReference type="GO" id="GO:0032865">
    <property type="term" value="C:ERMES complex"/>
    <property type="evidence" value="ECO:0000318"/>
    <property type="project" value="GO_Central"/>
</dbReference>
<dbReference type="GO" id="GO:0008289">
    <property type="term" value="F:lipid binding"/>
    <property type="evidence" value="ECO:0000318"/>
    <property type="project" value="GO_Central"/>
</dbReference>
<dbReference type="GO" id="GO:0120013">
    <property type="term" value="F:lipid transfer activity"/>
    <property type="evidence" value="ECO:0007669"/>
    <property type="project" value="EnsemblFungi"/>
</dbReference>
<dbReference type="GO" id="GO:0015917">
    <property type="term" value="P:aminophospholipid transport"/>
    <property type="evidence" value="ECO:0000318"/>
    <property type="project" value="GO_Central"/>
</dbReference>
<dbReference type="GO" id="GO:0000002">
    <property type="term" value="P:mitochondrial genome maintenance"/>
    <property type="evidence" value="ECO:0007669"/>
    <property type="project" value="UniProtKB-UniRule"/>
</dbReference>
<dbReference type="GO" id="GO:0070096">
    <property type="term" value="P:mitochondrial outer membrane translocase complex assembly"/>
    <property type="evidence" value="ECO:0007669"/>
    <property type="project" value="EnsemblFungi"/>
</dbReference>
<dbReference type="GO" id="GO:1990456">
    <property type="term" value="P:mitochondrion-endoplasmic reticulum membrane tethering"/>
    <property type="evidence" value="ECO:0000318"/>
    <property type="project" value="GO_Central"/>
</dbReference>
<dbReference type="GO" id="GO:0045040">
    <property type="term" value="P:protein insertion into mitochondrial outer membrane"/>
    <property type="evidence" value="ECO:0007669"/>
    <property type="project" value="UniProtKB-UniRule"/>
</dbReference>
<dbReference type="CDD" id="cd21671">
    <property type="entry name" value="SMP_Mmm1"/>
    <property type="match status" value="1"/>
</dbReference>
<dbReference type="HAMAP" id="MF_03103">
    <property type="entry name" value="Mmm1"/>
    <property type="match status" value="1"/>
</dbReference>
<dbReference type="InterPro" id="IPR027537">
    <property type="entry name" value="Mmm1"/>
</dbReference>
<dbReference type="InterPro" id="IPR019411">
    <property type="entry name" value="MMM1_dom"/>
</dbReference>
<dbReference type="InterPro" id="IPR031468">
    <property type="entry name" value="SMP_LBD"/>
</dbReference>
<dbReference type="PANTHER" id="PTHR13466:SF0">
    <property type="entry name" value="SMP-LTD DOMAIN-CONTAINING PROTEIN"/>
    <property type="match status" value="1"/>
</dbReference>
<dbReference type="PANTHER" id="PTHR13466">
    <property type="entry name" value="TEX2 PROTEIN-RELATED"/>
    <property type="match status" value="1"/>
</dbReference>
<dbReference type="Pfam" id="PF10296">
    <property type="entry name" value="MMM1"/>
    <property type="match status" value="1"/>
</dbReference>
<dbReference type="PROSITE" id="PS51847">
    <property type="entry name" value="SMP"/>
    <property type="match status" value="1"/>
</dbReference>
<organism>
    <name type="scientific">Schizosaccharomyces japonicus (strain yFS275 / FY16936)</name>
    <name type="common">Fission yeast</name>
    <dbReference type="NCBI Taxonomy" id="402676"/>
    <lineage>
        <taxon>Eukaryota</taxon>
        <taxon>Fungi</taxon>
        <taxon>Dikarya</taxon>
        <taxon>Ascomycota</taxon>
        <taxon>Taphrinomycotina</taxon>
        <taxon>Schizosaccharomycetes</taxon>
        <taxon>Schizosaccharomycetales</taxon>
        <taxon>Schizosaccharomycetaceae</taxon>
        <taxon>Schizosaccharomyces</taxon>
    </lineage>
</organism>
<accession>B6K6N3</accession>
<comment type="function">
    <text evidence="1">Component of the ERMES/MDM complex, which serves as a molecular tether to connect the endoplasmic reticulum (ER) and mitochondria. Components of this complex are involved in the control of mitochondrial shape and protein biogenesis, and function in nonvesicular lipid trafficking between the ER and mitochondria. The mdm12-mmm1 subcomplex functions in the major beta-barrel assembly pathway that is responsible for biogenesis of all outer membrane beta-barrel proteins, and acts in a late step after the SAM complex. The mdm10-mdm12-mmm1 subcomplex further acts in the TOM40-specific pathway after the action of the mdm12-mmm1 complex. Essential for establishing and maintaining the structure of mitochondria and maintenance of mtDNA nucleoids.</text>
</comment>
<comment type="subunit">
    <text evidence="1">Homodimer. Component of the ER-mitochondria encounter structure (ERMES) or MDM complex, composed of mmm1, mdm10, mdm12 and mdm34. A mmm1 homodimer associates with one molecule of mdm12 on each side in a pairwise head-to-tail manner, and the SMP-LTD domains of mmm1 and mdm12 generate a continuous hydrophobic tunnel for phospholipid trafficking.</text>
</comment>
<comment type="subcellular location">
    <subcellularLocation>
        <location evidence="1">Endoplasmic reticulum membrane</location>
        <topology evidence="1">Single-pass type I membrane protein</topology>
    </subcellularLocation>
    <text evidence="1">The ERMES/MDM complex localizes to a few discrete foci (around 10 per single cell), that represent mitochondria-endoplasmic reticulum junctions. These foci are often found next to mtDNA nucleoids.</text>
</comment>
<comment type="domain">
    <text evidence="1">The SMP-LTD domain is a barrel-like domain that can bind various types of glycerophospholipids in its interior and mediate their transfer between two adjacent bilayers.</text>
</comment>
<comment type="similarity">
    <text evidence="1">Belongs to the MMM1 family.</text>
</comment>
<reference key="1">
    <citation type="journal article" date="2011" name="Science">
        <title>Comparative functional genomics of the fission yeasts.</title>
        <authorList>
            <person name="Rhind N."/>
            <person name="Chen Z."/>
            <person name="Yassour M."/>
            <person name="Thompson D.A."/>
            <person name="Haas B.J."/>
            <person name="Habib N."/>
            <person name="Wapinski I."/>
            <person name="Roy S."/>
            <person name="Lin M.F."/>
            <person name="Heiman D.I."/>
            <person name="Young S.K."/>
            <person name="Furuya K."/>
            <person name="Guo Y."/>
            <person name="Pidoux A."/>
            <person name="Chen H.M."/>
            <person name="Robbertse B."/>
            <person name="Goldberg J.M."/>
            <person name="Aoki K."/>
            <person name="Bayne E.H."/>
            <person name="Berlin A.M."/>
            <person name="Desjardins C.A."/>
            <person name="Dobbs E."/>
            <person name="Dukaj L."/>
            <person name="Fan L."/>
            <person name="FitzGerald M.G."/>
            <person name="French C."/>
            <person name="Gujja S."/>
            <person name="Hansen K."/>
            <person name="Keifenheim D."/>
            <person name="Levin J.Z."/>
            <person name="Mosher R.A."/>
            <person name="Mueller C.A."/>
            <person name="Pfiffner J."/>
            <person name="Priest M."/>
            <person name="Russ C."/>
            <person name="Smialowska A."/>
            <person name="Swoboda P."/>
            <person name="Sykes S.M."/>
            <person name="Vaughn M."/>
            <person name="Vengrova S."/>
            <person name="Yoder R."/>
            <person name="Zeng Q."/>
            <person name="Allshire R."/>
            <person name="Baulcombe D."/>
            <person name="Birren B.W."/>
            <person name="Brown W."/>
            <person name="Ekwall K."/>
            <person name="Kellis M."/>
            <person name="Leatherwood J."/>
            <person name="Levin H."/>
            <person name="Margalit H."/>
            <person name="Martienssen R."/>
            <person name="Nieduszynski C.A."/>
            <person name="Spatafora J.W."/>
            <person name="Friedman N."/>
            <person name="Dalgaard J.Z."/>
            <person name="Baumann P."/>
            <person name="Niki H."/>
            <person name="Regev A."/>
            <person name="Nusbaum C."/>
        </authorList>
    </citation>
    <scope>NUCLEOTIDE SEQUENCE [LARGE SCALE GENOMIC DNA]</scope>
    <source>
        <strain>yFS275 / FY16936</strain>
    </source>
</reference>
<feature type="chain" id="PRO_0000384254" description="Maintenance of mitochondrial morphology protein 1">
    <location>
        <begin position="1"/>
        <end position="295"/>
    </location>
</feature>
<feature type="topological domain" description="Lumenal" evidence="1">
    <location>
        <begin position="1"/>
        <end position="12"/>
    </location>
</feature>
<feature type="transmembrane region" description="Helical" evidence="1">
    <location>
        <begin position="13"/>
        <end position="33"/>
    </location>
</feature>
<feature type="topological domain" description="Cytoplasmic" evidence="1">
    <location>
        <begin position="34"/>
        <end position="295"/>
    </location>
</feature>
<feature type="domain" description="SMP-LTD" evidence="1">
    <location>
        <begin position="81"/>
        <end position="278"/>
    </location>
</feature>